<feature type="chain" id="PRO_1000187559" description="Segregation and condensation protein A">
    <location>
        <begin position="1"/>
        <end position="251"/>
    </location>
</feature>
<keyword id="KW-0131">Cell cycle</keyword>
<keyword id="KW-0132">Cell division</keyword>
<keyword id="KW-0159">Chromosome partition</keyword>
<keyword id="KW-0963">Cytoplasm</keyword>
<accession>B2TQW6</accession>
<comment type="function">
    <text evidence="1">Participates in chromosomal partition during cell division. May act via the formation of a condensin-like complex containing Smc and ScpB that pull DNA away from mid-cell into both cell halves.</text>
</comment>
<comment type="subunit">
    <text evidence="1">Component of a cohesin-like complex composed of ScpA, ScpB and the Smc homodimer, in which ScpA and ScpB bind to the head domain of Smc. The presence of the three proteins is required for the association of the complex with DNA.</text>
</comment>
<comment type="subcellular location">
    <subcellularLocation>
        <location evidence="1">Cytoplasm</location>
    </subcellularLocation>
    <text evidence="1">Associated with two foci at the outer edges of the nucleoid region in young cells, and at four foci within both cell halves in older cells.</text>
</comment>
<comment type="similarity">
    <text evidence="1">Belongs to the ScpA family.</text>
</comment>
<proteinExistence type="inferred from homology"/>
<dbReference type="EMBL" id="CP001056">
    <property type="protein sequence ID" value="ACD23247.1"/>
    <property type="molecule type" value="Genomic_DNA"/>
</dbReference>
<dbReference type="SMR" id="B2TQW6"/>
<dbReference type="KEGG" id="cbk:CLL_A2366"/>
<dbReference type="HOGENOM" id="CLU_038686_3_0_9"/>
<dbReference type="Proteomes" id="UP000001195">
    <property type="component" value="Chromosome"/>
</dbReference>
<dbReference type="GO" id="GO:0005737">
    <property type="term" value="C:cytoplasm"/>
    <property type="evidence" value="ECO:0007669"/>
    <property type="project" value="UniProtKB-SubCell"/>
</dbReference>
<dbReference type="GO" id="GO:0051301">
    <property type="term" value="P:cell division"/>
    <property type="evidence" value="ECO:0007669"/>
    <property type="project" value="UniProtKB-KW"/>
</dbReference>
<dbReference type="GO" id="GO:0007059">
    <property type="term" value="P:chromosome segregation"/>
    <property type="evidence" value="ECO:0007669"/>
    <property type="project" value="UniProtKB-UniRule"/>
</dbReference>
<dbReference type="GO" id="GO:0006260">
    <property type="term" value="P:DNA replication"/>
    <property type="evidence" value="ECO:0007669"/>
    <property type="project" value="UniProtKB-UniRule"/>
</dbReference>
<dbReference type="Gene3D" id="6.10.250.2410">
    <property type="match status" value="1"/>
</dbReference>
<dbReference type="Gene3D" id="1.10.10.580">
    <property type="entry name" value="Structural maintenance of chromosome 1. Chain E"/>
    <property type="match status" value="1"/>
</dbReference>
<dbReference type="HAMAP" id="MF_01805">
    <property type="entry name" value="ScpA"/>
    <property type="match status" value="1"/>
</dbReference>
<dbReference type="InterPro" id="IPR003768">
    <property type="entry name" value="ScpA"/>
</dbReference>
<dbReference type="InterPro" id="IPR023093">
    <property type="entry name" value="ScpA-like_C"/>
</dbReference>
<dbReference type="NCBIfam" id="NF000994">
    <property type="entry name" value="PRK00104.1-3"/>
    <property type="match status" value="1"/>
</dbReference>
<dbReference type="PANTHER" id="PTHR33969">
    <property type="entry name" value="SEGREGATION AND CONDENSATION PROTEIN A"/>
    <property type="match status" value="1"/>
</dbReference>
<dbReference type="PANTHER" id="PTHR33969:SF2">
    <property type="entry name" value="SEGREGATION AND CONDENSATION PROTEIN A"/>
    <property type="match status" value="1"/>
</dbReference>
<dbReference type="Pfam" id="PF02616">
    <property type="entry name" value="SMC_ScpA"/>
    <property type="match status" value="1"/>
</dbReference>
<name>SCPA_CLOBB</name>
<protein>
    <recommendedName>
        <fullName evidence="1">Segregation and condensation protein A</fullName>
    </recommendedName>
</protein>
<organism>
    <name type="scientific">Clostridium botulinum (strain Eklund 17B / Type B)</name>
    <dbReference type="NCBI Taxonomy" id="935198"/>
    <lineage>
        <taxon>Bacteria</taxon>
        <taxon>Bacillati</taxon>
        <taxon>Bacillota</taxon>
        <taxon>Clostridia</taxon>
        <taxon>Eubacteriales</taxon>
        <taxon>Clostridiaceae</taxon>
        <taxon>Clostridium</taxon>
    </lineage>
</organism>
<reference key="1">
    <citation type="submission" date="2008-04" db="EMBL/GenBank/DDBJ databases">
        <title>Complete sequence of Clostridium botulinum strain Eklund.</title>
        <authorList>
            <person name="Brinkac L.M."/>
            <person name="Brown J.L."/>
            <person name="Bruce D."/>
            <person name="Detter C."/>
            <person name="Munk C."/>
            <person name="Smith L.A."/>
            <person name="Smith T.J."/>
            <person name="Sutton G."/>
            <person name="Brettin T.S."/>
        </authorList>
    </citation>
    <scope>NUCLEOTIDE SEQUENCE [LARGE SCALE GENOMIC DNA]</scope>
    <source>
        <strain>Eklund 17B / Type B</strain>
    </source>
</reference>
<sequence>MDFPSIKIKDFEGPFDLLLHLIKKNQMDIYNVEISKITNQYLKYIDDMKFMDLEITSEFIVVAATLIEIKSKHLLPKIKKDEDEDEEDQEKNLIEKLILYKKIKRVAEFFKDRYVNSGELYTKKPEIIEEINLPNNNEDIFKNLTLLELYNMYNNLLEIYNNKQNKANVIQKRIYVDKYKIEDKLEYLLGLIENNEVSKFSEIIDKCECKLECIVSFLALLEMVKLKKVRVYQSDSFDNILIERRQDEGEE</sequence>
<gene>
    <name evidence="1" type="primary">scpA</name>
    <name type="ordered locus">CLL_A2366</name>
</gene>
<evidence type="ECO:0000255" key="1">
    <source>
        <dbReference type="HAMAP-Rule" id="MF_01805"/>
    </source>
</evidence>